<organism>
    <name type="scientific">Thermococcus kodakarensis (strain ATCC BAA-918 / JCM 12380 / KOD1)</name>
    <name type="common">Pyrococcus kodakaraensis (strain KOD1)</name>
    <dbReference type="NCBI Taxonomy" id="69014"/>
    <lineage>
        <taxon>Archaea</taxon>
        <taxon>Methanobacteriati</taxon>
        <taxon>Methanobacteriota</taxon>
        <taxon>Thermococci</taxon>
        <taxon>Thermococcales</taxon>
        <taxon>Thermococcaceae</taxon>
        <taxon>Thermococcus</taxon>
    </lineage>
</organism>
<comment type="function">
    <text evidence="2 3">Catalyzes the hydrolysis of L-asparagine into L-aspartate and ammonia (PubMed:31923515, PubMed:35607391). Also displays D-asparaginase activity, which is about 10% of the L-asparaginase activity (PubMed:31923515). Does not exhibit glutaminase activity (PubMed:31923515).</text>
</comment>
<comment type="catalytic activity">
    <reaction evidence="2 3">
        <text>L-asparagine + H2O = L-aspartate + NH4(+)</text>
        <dbReference type="Rhea" id="RHEA:21016"/>
        <dbReference type="ChEBI" id="CHEBI:15377"/>
        <dbReference type="ChEBI" id="CHEBI:28938"/>
        <dbReference type="ChEBI" id="CHEBI:29991"/>
        <dbReference type="ChEBI" id="CHEBI:58048"/>
        <dbReference type="EC" id="3.5.1.1"/>
    </reaction>
</comment>
<comment type="activity regulation">
    <text evidence="2 3">Undergoes auto-cleavage in a temperature-dependent and glycine-independent manner (PubMed:35607391). Metal ions and EDTA do not have any significant effect on enzyme activity, indicating that activity is metal-independent (PubMed:31923515).</text>
</comment>
<comment type="biophysicochemical properties">
    <kinetics>
        <KM evidence="2">3.1 mM for L-asparagine</KM>
        <Vmax evidence="2">833.0 umol/min/mg enzyme</Vmax>
    </kinetics>
    <phDependence>
        <text evidence="2">Optimum pH is 7.0.</text>
    </phDependence>
    <temperatureDependence>
        <text evidence="2">Displays activity at a broad temperature range and is highly thermostable (PubMed:31923515). Optimum temperature is 85 degrees Celsius (PubMed:31923515). Shows a half-life of nearly 18 hours at 85 degrees Celsius (PubMed:31923515).</text>
    </temperatureDependence>
</comment>
<comment type="subunit">
    <text evidence="1 2">Heterotetramer of two alpha and two beta chains arranged as a dimer of alpha/beta heterodimers (By similarity). The uncleaved protein forms homodimers (PubMed:31923515).</text>
</comment>
<comment type="PTM">
    <text evidence="2 3 6">Autocleaved (PubMed:35607391). Generates the alpha and beta subunits (PubMed:35607391). The N-terminal residue of the beta subunit is thought to be responsible for the nucleophile hydrolase activity (Probable). Predominantly produced in the uncleaved form when gene expression is induced at 37 degrees Celsius with 0.5 mM IPTG (PubMed:31923515). When produced at 42 degrees Celsius without adding IPTG, approximately 90% of the protein is found in the cleaved form, while the remaining 10% is observed as uncleaved precursor (PubMed:35607391). Undergoes complete auto-cleavage within 24 hours at 37 degrees Celsius (PubMed:35607391).</text>
</comment>
<comment type="biotechnology">
    <text evidence="3">L-asparaginases are widely used in fried and baked food industries to prevent formation of acrylamide, a neurotoxin formed by the reaction of asparagine with reducing sugars (PubMed:35607391). TK2246 reduces the acrylamide formation more than 80% in French fries, chapati and yeast-leavened bread (PubMed:35607391). High activity and effective acrylamide reduction potential, without compromising the sensory properties, make TK2246 a promising candidate for food processing (PubMed:35607391).</text>
</comment>
<comment type="similarity">
    <text evidence="5">Belongs to the Ntn-hydrolase family.</text>
</comment>
<sequence length="306" mass="32642">MAAIIVHGGAGTIRKEERIPKVIEGVREAVLAGWRELKRGSALDAVEEAVKALEDNPIFNAGTGSVLTLDGKVEMDAAIMRGKTLDAGAVAGIWGVKNPISVARKVMEKTDHVLLIGEGAVKFARLLGFEEYDPITEERLKQWEELRKKLIEKGETKHWKKLNELIKEYPEVLRSTVGAVAFDGEEVVAGTSTGGVFLKMFGRVGDTPIIGGGTYANEVAGASCTGLGEVAIKLALAKSAADFVRLGMDAQTASEAAISLATKYFGPDTMGIIMVDAKGNVGFAKNTKHMSYAFMKDGMDEPEAGV</sequence>
<name>ASPGP_THEKO</name>
<proteinExistence type="evidence at protein level"/>
<gene>
    <name evidence="7" type="ordered locus">TK2246</name>
</gene>
<evidence type="ECO:0000250" key="1">
    <source>
        <dbReference type="UniProtKB" id="P37595"/>
    </source>
</evidence>
<evidence type="ECO:0000269" key="2">
    <source>
    </source>
</evidence>
<evidence type="ECO:0000269" key="3">
    <source>
    </source>
</evidence>
<evidence type="ECO:0000303" key="4">
    <source>
    </source>
</evidence>
<evidence type="ECO:0000305" key="5"/>
<evidence type="ECO:0000305" key="6">
    <source>
    </source>
</evidence>
<evidence type="ECO:0000312" key="7">
    <source>
        <dbReference type="EMBL" id="BAD86435.1"/>
    </source>
</evidence>
<reference key="1">
    <citation type="journal article" date="2005" name="Genome Res.">
        <title>Complete genome sequence of the hyperthermophilic archaeon Thermococcus kodakaraensis KOD1 and comparison with Pyrococcus genomes.</title>
        <authorList>
            <person name="Fukui T."/>
            <person name="Atomi H."/>
            <person name="Kanai T."/>
            <person name="Matsumi R."/>
            <person name="Fujiwara S."/>
            <person name="Imanaka T."/>
        </authorList>
    </citation>
    <scope>NUCLEOTIDE SEQUENCE [LARGE SCALE GENOMIC DNA]</scope>
    <source>
        <strain>ATCC BAA-918 / JCM 12380 / KOD1</strain>
    </source>
</reference>
<reference key="2">
    <citation type="journal article" date="2020" name="Int. J. Biol. Macromol.">
        <title>Heterologous gene expression and characterization of TK2246, a highly active and thermostable plant type l-asparaginase from Thermococcus kodakarensis.</title>
        <authorList>
            <person name="Chohan S.M."/>
            <person name="Sajed M."/>
            <person name="Naeem S.U."/>
            <person name="Rashid N."/>
        </authorList>
    </citation>
    <scope>FUNCTION</scope>
    <scope>CATALYTIC ACTIVITY</scope>
    <scope>ACTIVITY REGULATION</scope>
    <scope>BIOPHYSICOCHEMICAL PROPERTIES</scope>
    <scope>SUBUNIT</scope>
    <source>
        <strain>ATCC BAA-918 / JCM 12380 / KOD1</strain>
    </source>
</reference>
<reference key="3">
    <citation type="journal article" date="2022" name="3 Biotech.">
        <title>Temperature dependent autocleavage and applications of recombinant L-asparaginase from Thermococcus kodakarensis for acrylamide mitigation.</title>
        <authorList>
            <person name="Sajed M."/>
            <person name="Ahmad N."/>
            <person name="Rashid N."/>
        </authorList>
    </citation>
    <scope>FUNCTION</scope>
    <scope>CATALYTIC ACTIVITY</scope>
    <scope>ACTIVITY REGULATION</scope>
    <scope>AUTOCATALYTIC CLEAVAGE</scope>
    <scope>BIOTECHNOLOGY</scope>
</reference>
<dbReference type="EC" id="3.5.1.1" evidence="2 3"/>
<dbReference type="EMBL" id="AP006878">
    <property type="protein sequence ID" value="BAD86435.1"/>
    <property type="molecule type" value="Genomic_DNA"/>
</dbReference>
<dbReference type="RefSeq" id="WP_011251196.1">
    <property type="nucleotide sequence ID" value="NC_006624.1"/>
</dbReference>
<dbReference type="SMR" id="Q5JHT1"/>
<dbReference type="STRING" id="69014.TK2246"/>
<dbReference type="EnsemblBacteria" id="BAD86435">
    <property type="protein sequence ID" value="BAD86435"/>
    <property type="gene ID" value="TK2246"/>
</dbReference>
<dbReference type="GeneID" id="78448789"/>
<dbReference type="KEGG" id="tko:TK2246"/>
<dbReference type="PATRIC" id="fig|69014.16.peg.2201"/>
<dbReference type="eggNOG" id="arCOG04779">
    <property type="taxonomic scope" value="Archaea"/>
</dbReference>
<dbReference type="HOGENOM" id="CLU_021603_1_2_2"/>
<dbReference type="InParanoid" id="Q5JHT1"/>
<dbReference type="OrthoDB" id="18230at2157"/>
<dbReference type="PhylomeDB" id="Q5JHT1"/>
<dbReference type="BRENDA" id="3.5.1.1">
    <property type="organism ID" value="5246"/>
</dbReference>
<dbReference type="Proteomes" id="UP000000536">
    <property type="component" value="Chromosome"/>
</dbReference>
<dbReference type="GO" id="GO:0005737">
    <property type="term" value="C:cytoplasm"/>
    <property type="evidence" value="ECO:0000318"/>
    <property type="project" value="GO_Central"/>
</dbReference>
<dbReference type="GO" id="GO:0004067">
    <property type="term" value="F:asparaginase activity"/>
    <property type="evidence" value="ECO:0007669"/>
    <property type="project" value="UniProtKB-EC"/>
</dbReference>
<dbReference type="GO" id="GO:0008233">
    <property type="term" value="F:peptidase activity"/>
    <property type="evidence" value="ECO:0007669"/>
    <property type="project" value="UniProtKB-KW"/>
</dbReference>
<dbReference type="GO" id="GO:0006508">
    <property type="term" value="P:proteolysis"/>
    <property type="evidence" value="ECO:0007669"/>
    <property type="project" value="UniProtKB-KW"/>
</dbReference>
<dbReference type="CDD" id="cd04512">
    <property type="entry name" value="Ntn_Asparaginase_2_like"/>
    <property type="match status" value="1"/>
</dbReference>
<dbReference type="FunFam" id="3.60.20.30:FF:000001">
    <property type="entry name" value="Isoaspartyl peptidase/L-asparaginase"/>
    <property type="match status" value="1"/>
</dbReference>
<dbReference type="Gene3D" id="3.60.20.30">
    <property type="entry name" value="(Glycosyl)asparaginase"/>
    <property type="match status" value="1"/>
</dbReference>
<dbReference type="InterPro" id="IPR029055">
    <property type="entry name" value="Ntn_hydrolases_N"/>
</dbReference>
<dbReference type="InterPro" id="IPR000246">
    <property type="entry name" value="Peptidase_T2"/>
</dbReference>
<dbReference type="PANTHER" id="PTHR10188">
    <property type="entry name" value="L-ASPARAGINASE"/>
    <property type="match status" value="1"/>
</dbReference>
<dbReference type="PANTHER" id="PTHR10188:SF6">
    <property type="entry name" value="N(4)-(BETA-N-ACETYLGLUCOSAMINYL)-L-ASPARAGINASE"/>
    <property type="match status" value="1"/>
</dbReference>
<dbReference type="Pfam" id="PF01112">
    <property type="entry name" value="Asparaginase_2"/>
    <property type="match status" value="1"/>
</dbReference>
<dbReference type="SUPFAM" id="SSF56235">
    <property type="entry name" value="N-terminal nucleophile aminohydrolases (Ntn hydrolases)"/>
    <property type="match status" value="1"/>
</dbReference>
<protein>
    <recommendedName>
        <fullName evidence="4">Plant-type L-asparaginase</fullName>
        <ecNumber evidence="2 3">3.5.1.1</ecNumber>
    </recommendedName>
    <alternativeName>
        <fullName evidence="4">L-asparagine amidohydrolase</fullName>
    </alternativeName>
    <component>
        <recommendedName>
            <fullName>L-asparaginase subunit alpha</fullName>
        </recommendedName>
    </component>
    <component>
        <recommendedName>
            <fullName>L-asparaginase subunit beta</fullName>
        </recommendedName>
    </component>
</protein>
<accession>Q5JHT1</accession>
<feature type="chain" id="PRO_0000184582" description="L-asparaginase subunit alpha">
    <location>
        <begin position="1"/>
        <end position="175"/>
    </location>
</feature>
<feature type="chain" id="PRO_0000329019" description="L-asparaginase subunit beta">
    <location>
        <begin position="176"/>
        <end position="306"/>
    </location>
</feature>
<feature type="active site" description="Nucleophile" evidence="1">
    <location>
        <position position="176"/>
    </location>
</feature>
<feature type="binding site" evidence="1">
    <location>
        <begin position="203"/>
        <end position="206"/>
    </location>
    <ligand>
        <name>substrate</name>
    </ligand>
</feature>
<feature type="binding site" evidence="1">
    <location>
        <begin position="225"/>
        <end position="228"/>
    </location>
    <ligand>
        <name>substrate</name>
    </ligand>
</feature>
<feature type="site" description="Cleavage; by autolysis" evidence="1">
    <location>
        <begin position="175"/>
        <end position="176"/>
    </location>
</feature>
<keyword id="KW-0068">Autocatalytic cleavage</keyword>
<keyword id="KW-0378">Hydrolase</keyword>
<keyword id="KW-0645">Protease</keyword>
<keyword id="KW-1185">Reference proteome</keyword>